<organism>
    <name type="scientific">Teredinibacter turnerae (strain ATCC 39867 / T7901)</name>
    <dbReference type="NCBI Taxonomy" id="377629"/>
    <lineage>
        <taxon>Bacteria</taxon>
        <taxon>Pseudomonadati</taxon>
        <taxon>Pseudomonadota</taxon>
        <taxon>Gammaproteobacteria</taxon>
        <taxon>Cellvibrionales</taxon>
        <taxon>Cellvibrionaceae</taxon>
        <taxon>Teredinibacter</taxon>
    </lineage>
</organism>
<gene>
    <name evidence="1" type="primary">hflD</name>
    <name type="ordered locus">TERTU_1750</name>
</gene>
<comment type="subcellular location">
    <subcellularLocation>
        <location>Cytoplasm</location>
    </subcellularLocation>
    <subcellularLocation>
        <location evidence="1">Cell inner membrane</location>
        <topology evidence="1">Peripheral membrane protein</topology>
        <orientation evidence="1">Cytoplasmic side</orientation>
    </subcellularLocation>
</comment>
<comment type="similarity">
    <text evidence="1">Belongs to the HflD family.</text>
</comment>
<evidence type="ECO:0000255" key="1">
    <source>
        <dbReference type="HAMAP-Rule" id="MF_00695"/>
    </source>
</evidence>
<reference key="1">
    <citation type="journal article" date="2009" name="PLoS ONE">
        <title>The complete genome of Teredinibacter turnerae T7901: an intracellular endosymbiont of marine wood-boring bivalves (shipworms).</title>
        <authorList>
            <person name="Yang J.C."/>
            <person name="Madupu R."/>
            <person name="Durkin A.S."/>
            <person name="Ekborg N.A."/>
            <person name="Pedamallu C.S."/>
            <person name="Hostetler J.B."/>
            <person name="Radune D."/>
            <person name="Toms B.S."/>
            <person name="Henrissat B."/>
            <person name="Coutinho P.M."/>
            <person name="Schwarz S."/>
            <person name="Field L."/>
            <person name="Trindade-Silva A.E."/>
            <person name="Soares C.A.G."/>
            <person name="Elshahawi S."/>
            <person name="Hanora A."/>
            <person name="Schmidt E.W."/>
            <person name="Haygood M.G."/>
            <person name="Posfai J."/>
            <person name="Benner J."/>
            <person name="Madinger C."/>
            <person name="Nove J."/>
            <person name="Anton B."/>
            <person name="Chaudhary K."/>
            <person name="Foster J."/>
            <person name="Holman A."/>
            <person name="Kumar S."/>
            <person name="Lessard P.A."/>
            <person name="Luyten Y.A."/>
            <person name="Slatko B."/>
            <person name="Wood N."/>
            <person name="Wu B."/>
            <person name="Teplitski M."/>
            <person name="Mougous J.D."/>
            <person name="Ward N."/>
            <person name="Eisen J.A."/>
            <person name="Badger J.H."/>
            <person name="Distel D.L."/>
        </authorList>
    </citation>
    <scope>NUCLEOTIDE SEQUENCE [LARGE SCALE GENOMIC DNA]</scope>
    <source>
        <strain>ATCC 39867 / T7901</strain>
    </source>
</reference>
<protein>
    <recommendedName>
        <fullName evidence="1">High frequency lysogenization protein HflD homolog</fullName>
    </recommendedName>
</protein>
<dbReference type="EMBL" id="CP001614">
    <property type="protein sequence ID" value="ACR13024.1"/>
    <property type="molecule type" value="Genomic_DNA"/>
</dbReference>
<dbReference type="RefSeq" id="WP_015819137.1">
    <property type="nucleotide sequence ID" value="NC_012997.1"/>
</dbReference>
<dbReference type="SMR" id="C5BU85"/>
<dbReference type="STRING" id="377629.TERTU_1750"/>
<dbReference type="KEGG" id="ttu:TERTU_1750"/>
<dbReference type="eggNOG" id="COG2915">
    <property type="taxonomic scope" value="Bacteria"/>
</dbReference>
<dbReference type="HOGENOM" id="CLU_098920_0_0_6"/>
<dbReference type="OrthoDB" id="9788031at2"/>
<dbReference type="Proteomes" id="UP000009080">
    <property type="component" value="Chromosome"/>
</dbReference>
<dbReference type="GO" id="GO:0005737">
    <property type="term" value="C:cytoplasm"/>
    <property type="evidence" value="ECO:0007669"/>
    <property type="project" value="UniProtKB-SubCell"/>
</dbReference>
<dbReference type="GO" id="GO:0005886">
    <property type="term" value="C:plasma membrane"/>
    <property type="evidence" value="ECO:0007669"/>
    <property type="project" value="UniProtKB-SubCell"/>
</dbReference>
<dbReference type="Gene3D" id="1.10.3890.10">
    <property type="entry name" value="HflD-like"/>
    <property type="match status" value="1"/>
</dbReference>
<dbReference type="HAMAP" id="MF_00695">
    <property type="entry name" value="HflD_protein"/>
    <property type="match status" value="1"/>
</dbReference>
<dbReference type="InterPro" id="IPR007451">
    <property type="entry name" value="HflD"/>
</dbReference>
<dbReference type="InterPro" id="IPR035932">
    <property type="entry name" value="HflD-like_sf"/>
</dbReference>
<dbReference type="NCBIfam" id="NF001246">
    <property type="entry name" value="PRK00218.1-2"/>
    <property type="match status" value="1"/>
</dbReference>
<dbReference type="PANTHER" id="PTHR38100">
    <property type="entry name" value="HIGH FREQUENCY LYSOGENIZATION PROTEIN HFLD"/>
    <property type="match status" value="1"/>
</dbReference>
<dbReference type="PANTHER" id="PTHR38100:SF1">
    <property type="entry name" value="HIGH FREQUENCY LYSOGENIZATION PROTEIN HFLD"/>
    <property type="match status" value="1"/>
</dbReference>
<dbReference type="Pfam" id="PF04356">
    <property type="entry name" value="DUF489"/>
    <property type="match status" value="1"/>
</dbReference>
<dbReference type="SUPFAM" id="SSF101322">
    <property type="entry name" value="YcfC-like"/>
    <property type="match status" value="1"/>
</dbReference>
<name>HFLD_TERTT</name>
<accession>C5BU85</accession>
<sequence>MQKSWRNIAIALAGMTQCARQVEELAKTGYLKTEVFETAVKSLINTDPSSAEDVFGGLDAVQPGLSTLKDILEDHRSPGNADILRYVLGAVVLQKRLARRKDVLYIIGNRLEKVSQQVEHFGCSHDNVVSNIADIYTDTISKFPYRIQVTGEFNYLQQERVAAQIRSLLFAAIRAATLWRQAGGTRWHMLFYRSKMLAATEQLLQRA</sequence>
<keyword id="KW-0997">Cell inner membrane</keyword>
<keyword id="KW-1003">Cell membrane</keyword>
<keyword id="KW-0963">Cytoplasm</keyword>
<keyword id="KW-0472">Membrane</keyword>
<keyword id="KW-1185">Reference proteome</keyword>
<proteinExistence type="inferred from homology"/>
<feature type="chain" id="PRO_1000212630" description="High frequency lysogenization protein HflD homolog">
    <location>
        <begin position="1"/>
        <end position="207"/>
    </location>
</feature>